<keyword id="KW-0145">Chemotaxis</keyword>
<keyword id="KW-0378">Hydrolase</keyword>
<keyword id="KW-1185">Reference proteome</keyword>
<sequence>MSRKKKPIDIFLQPGEYFVADAGYQIRTMLGSCVSITLWHPATRQGAMSHFLLPTRGASKPKQTLDARYGDEALKLMLIELQRLGIPSAQCQGKIFGGGNMFPGNLRSGALNVGQRNGEAALTLLREHGIPVMSESLFGIGHRQIVFDVSNGDVWSHQVMPIGTDSGDKGDLL</sequence>
<organism>
    <name type="scientific">Albidiferax ferrireducens (strain ATCC BAA-621 / DSM 15236 / T118)</name>
    <name type="common">Rhodoferax ferrireducens</name>
    <dbReference type="NCBI Taxonomy" id="338969"/>
    <lineage>
        <taxon>Bacteria</taxon>
        <taxon>Pseudomonadati</taxon>
        <taxon>Pseudomonadota</taxon>
        <taxon>Betaproteobacteria</taxon>
        <taxon>Burkholderiales</taxon>
        <taxon>Comamonadaceae</taxon>
        <taxon>Rhodoferax</taxon>
    </lineage>
</organism>
<gene>
    <name evidence="1" type="primary">cheD2</name>
    <name type="ordered locus">Rfer_0905</name>
</gene>
<proteinExistence type="inferred from homology"/>
<dbReference type="EC" id="3.5.1.44" evidence="1"/>
<dbReference type="EMBL" id="CP000267">
    <property type="protein sequence ID" value="ABD68653.1"/>
    <property type="molecule type" value="Genomic_DNA"/>
</dbReference>
<dbReference type="RefSeq" id="WP_011463226.1">
    <property type="nucleotide sequence ID" value="NC_007908.1"/>
</dbReference>
<dbReference type="SMR" id="Q220A0"/>
<dbReference type="STRING" id="338969.Rfer_0905"/>
<dbReference type="KEGG" id="rfr:Rfer_0905"/>
<dbReference type="eggNOG" id="COG1871">
    <property type="taxonomic scope" value="Bacteria"/>
</dbReference>
<dbReference type="HOGENOM" id="CLU_087854_1_1_4"/>
<dbReference type="OrthoDB" id="9807202at2"/>
<dbReference type="Proteomes" id="UP000008332">
    <property type="component" value="Chromosome"/>
</dbReference>
<dbReference type="GO" id="GO:0050568">
    <property type="term" value="F:protein-glutamine glutaminase activity"/>
    <property type="evidence" value="ECO:0007669"/>
    <property type="project" value="UniProtKB-UniRule"/>
</dbReference>
<dbReference type="GO" id="GO:0006935">
    <property type="term" value="P:chemotaxis"/>
    <property type="evidence" value="ECO:0007669"/>
    <property type="project" value="UniProtKB-UniRule"/>
</dbReference>
<dbReference type="CDD" id="cd16352">
    <property type="entry name" value="CheD"/>
    <property type="match status" value="1"/>
</dbReference>
<dbReference type="Gene3D" id="3.30.1330.200">
    <property type="match status" value="1"/>
</dbReference>
<dbReference type="HAMAP" id="MF_01440">
    <property type="entry name" value="CheD"/>
    <property type="match status" value="1"/>
</dbReference>
<dbReference type="InterPro" id="IPR038592">
    <property type="entry name" value="CheD-like_sf"/>
</dbReference>
<dbReference type="InterPro" id="IPR005659">
    <property type="entry name" value="Chemorcpt_Glu_NH3ase_CheD"/>
</dbReference>
<dbReference type="InterPro" id="IPR011324">
    <property type="entry name" value="Cytotoxic_necrot_fac-like_cat"/>
</dbReference>
<dbReference type="PANTHER" id="PTHR35147:SF3">
    <property type="entry name" value="CHEMORECEPTOR GLUTAMINE DEAMIDASE CHED 1-RELATED"/>
    <property type="match status" value="1"/>
</dbReference>
<dbReference type="PANTHER" id="PTHR35147">
    <property type="entry name" value="CHEMORECEPTOR GLUTAMINE DEAMIDASE CHED-RELATED"/>
    <property type="match status" value="1"/>
</dbReference>
<dbReference type="Pfam" id="PF03975">
    <property type="entry name" value="CheD"/>
    <property type="match status" value="1"/>
</dbReference>
<dbReference type="SUPFAM" id="SSF64438">
    <property type="entry name" value="CNF1/YfiH-like putative cysteine hydrolases"/>
    <property type="match status" value="1"/>
</dbReference>
<protein>
    <recommendedName>
        <fullName evidence="1">Probable chemoreceptor glutamine deamidase CheD 2</fullName>
        <ecNumber evidence="1">3.5.1.44</ecNumber>
    </recommendedName>
</protein>
<comment type="function">
    <text evidence="1">Probably deamidates glutamine residues to glutamate on methyl-accepting chemotaxis receptors (MCPs), playing an important role in chemotaxis.</text>
</comment>
<comment type="catalytic activity">
    <reaction evidence="1">
        <text>L-glutaminyl-[protein] + H2O = L-glutamyl-[protein] + NH4(+)</text>
        <dbReference type="Rhea" id="RHEA:16441"/>
        <dbReference type="Rhea" id="RHEA-COMP:10207"/>
        <dbReference type="Rhea" id="RHEA-COMP:10208"/>
        <dbReference type="ChEBI" id="CHEBI:15377"/>
        <dbReference type="ChEBI" id="CHEBI:28938"/>
        <dbReference type="ChEBI" id="CHEBI:29973"/>
        <dbReference type="ChEBI" id="CHEBI:30011"/>
        <dbReference type="EC" id="3.5.1.44"/>
    </reaction>
</comment>
<comment type="similarity">
    <text evidence="1">Belongs to the CheD family.</text>
</comment>
<feature type="chain" id="PRO_0000251061" description="Probable chemoreceptor glutamine deamidase CheD 2">
    <location>
        <begin position="1"/>
        <end position="173"/>
    </location>
</feature>
<reference key="1">
    <citation type="submission" date="2006-02" db="EMBL/GenBank/DDBJ databases">
        <title>Complete sequence of chromosome of Rhodoferax ferrireducens DSM 15236.</title>
        <authorList>
            <person name="Copeland A."/>
            <person name="Lucas S."/>
            <person name="Lapidus A."/>
            <person name="Barry K."/>
            <person name="Detter J.C."/>
            <person name="Glavina del Rio T."/>
            <person name="Hammon N."/>
            <person name="Israni S."/>
            <person name="Pitluck S."/>
            <person name="Brettin T."/>
            <person name="Bruce D."/>
            <person name="Han C."/>
            <person name="Tapia R."/>
            <person name="Gilna P."/>
            <person name="Kiss H."/>
            <person name="Schmutz J."/>
            <person name="Larimer F."/>
            <person name="Land M."/>
            <person name="Kyrpides N."/>
            <person name="Ivanova N."/>
            <person name="Richardson P."/>
        </authorList>
    </citation>
    <scope>NUCLEOTIDE SEQUENCE [LARGE SCALE GENOMIC DNA]</scope>
    <source>
        <strain>ATCC BAA-621 / DSM 15236 / T118</strain>
    </source>
</reference>
<evidence type="ECO:0000255" key="1">
    <source>
        <dbReference type="HAMAP-Rule" id="MF_01440"/>
    </source>
</evidence>
<name>CHED2_ALBFT</name>
<accession>Q220A0</accession>